<sequence>MDIMKDKIRQALSELDILATEVQIDQWLDYLKLLEKWNKVYNMTAIKNIDEMLVKHLFDSLAVAKYIKGDSTVDVGTGGGLPGVVLAILYPQHQFTLVDSVGKKIMFLKNVKKSLSLNNINPLNTRIENLEGNFDNIISRAFSSVDTFYELCKHFLTEHNQMLAMKGRDLEERNLESLPLNIEKYSIKVPFLNAERNLIVIRKKL</sequence>
<comment type="function">
    <text evidence="1">Specifically methylates the N7 position of guanine in position 527 of 16S rRNA.</text>
</comment>
<comment type="catalytic activity">
    <reaction evidence="1">
        <text>guanosine(527) in 16S rRNA + S-adenosyl-L-methionine = N(7)-methylguanosine(527) in 16S rRNA + S-adenosyl-L-homocysteine</text>
        <dbReference type="Rhea" id="RHEA:42732"/>
        <dbReference type="Rhea" id="RHEA-COMP:10209"/>
        <dbReference type="Rhea" id="RHEA-COMP:10210"/>
        <dbReference type="ChEBI" id="CHEBI:57856"/>
        <dbReference type="ChEBI" id="CHEBI:59789"/>
        <dbReference type="ChEBI" id="CHEBI:74269"/>
        <dbReference type="ChEBI" id="CHEBI:74480"/>
        <dbReference type="EC" id="2.1.1.170"/>
    </reaction>
</comment>
<comment type="subcellular location">
    <subcellularLocation>
        <location evidence="1">Cytoplasm</location>
    </subcellularLocation>
</comment>
<comment type="similarity">
    <text evidence="1">Belongs to the methyltransferase superfamily. RNA methyltransferase RsmG family.</text>
</comment>
<proteinExistence type="inferred from homology"/>
<organism>
    <name type="scientific">Francisella tularensis subsp. tularensis (strain SCHU S4 / Schu 4)</name>
    <dbReference type="NCBI Taxonomy" id="177416"/>
    <lineage>
        <taxon>Bacteria</taxon>
        <taxon>Pseudomonadati</taxon>
        <taxon>Pseudomonadota</taxon>
        <taxon>Gammaproteobacteria</taxon>
        <taxon>Thiotrichales</taxon>
        <taxon>Francisellaceae</taxon>
        <taxon>Francisella</taxon>
    </lineage>
</organism>
<name>RSMG_FRATT</name>
<feature type="chain" id="PRO_0000184252" description="Ribosomal RNA small subunit methyltransferase G">
    <location>
        <begin position="1"/>
        <end position="205"/>
    </location>
</feature>
<feature type="binding site" evidence="1">
    <location>
        <position position="76"/>
    </location>
    <ligand>
        <name>S-adenosyl-L-methionine</name>
        <dbReference type="ChEBI" id="CHEBI:59789"/>
    </ligand>
</feature>
<feature type="binding site" evidence="1">
    <location>
        <position position="81"/>
    </location>
    <ligand>
        <name>S-adenosyl-L-methionine</name>
        <dbReference type="ChEBI" id="CHEBI:59789"/>
    </ligand>
</feature>
<feature type="binding site" evidence="1">
    <location>
        <begin position="127"/>
        <end position="128"/>
    </location>
    <ligand>
        <name>S-adenosyl-L-methionine</name>
        <dbReference type="ChEBI" id="CHEBI:59789"/>
    </ligand>
</feature>
<feature type="binding site" evidence="1">
    <location>
        <position position="140"/>
    </location>
    <ligand>
        <name>S-adenosyl-L-methionine</name>
        <dbReference type="ChEBI" id="CHEBI:59789"/>
    </ligand>
</feature>
<reference key="1">
    <citation type="journal article" date="2005" name="Nat. Genet.">
        <title>The complete genome sequence of Francisella tularensis, the causative agent of tularemia.</title>
        <authorList>
            <person name="Larsson P."/>
            <person name="Oyston P.C.F."/>
            <person name="Chain P."/>
            <person name="Chu M.C."/>
            <person name="Duffield M."/>
            <person name="Fuxelius H.-H."/>
            <person name="Garcia E."/>
            <person name="Haelltorp G."/>
            <person name="Johansson D."/>
            <person name="Isherwood K.E."/>
            <person name="Karp P.D."/>
            <person name="Larsson E."/>
            <person name="Liu Y."/>
            <person name="Michell S."/>
            <person name="Prior J."/>
            <person name="Prior R."/>
            <person name="Malfatti S."/>
            <person name="Sjoestedt A."/>
            <person name="Svensson K."/>
            <person name="Thompson N."/>
            <person name="Vergez L."/>
            <person name="Wagg J.K."/>
            <person name="Wren B.W."/>
            <person name="Lindler L.E."/>
            <person name="Andersson S.G.E."/>
            <person name="Forsman M."/>
            <person name="Titball R.W."/>
        </authorList>
    </citation>
    <scope>NUCLEOTIDE SEQUENCE [LARGE SCALE GENOMIC DNA]</scope>
    <source>
        <strain>SCHU S4 / Schu 4</strain>
    </source>
</reference>
<gene>
    <name evidence="1" type="primary">rsmG</name>
    <name type="ordered locus">FTT_1687c</name>
</gene>
<dbReference type="EC" id="2.1.1.170" evidence="1"/>
<dbReference type="EMBL" id="AJ749949">
    <property type="protein sequence ID" value="CAG46320.1"/>
    <property type="molecule type" value="Genomic_DNA"/>
</dbReference>
<dbReference type="RefSeq" id="WP_003017602.1">
    <property type="nucleotide sequence ID" value="NC_006570.2"/>
</dbReference>
<dbReference type="RefSeq" id="YP_170592.1">
    <property type="nucleotide sequence ID" value="NC_006570.2"/>
</dbReference>
<dbReference type="SMR" id="Q5NEF0"/>
<dbReference type="STRING" id="177416.FTT_1687c"/>
<dbReference type="DNASU" id="3192244"/>
<dbReference type="EnsemblBacteria" id="CAG46320">
    <property type="protein sequence ID" value="CAG46320"/>
    <property type="gene ID" value="FTT_1687c"/>
</dbReference>
<dbReference type="KEGG" id="ftu:FTT_1687c"/>
<dbReference type="eggNOG" id="COG0357">
    <property type="taxonomic scope" value="Bacteria"/>
</dbReference>
<dbReference type="OrthoDB" id="9808773at2"/>
<dbReference type="Proteomes" id="UP000001174">
    <property type="component" value="Chromosome"/>
</dbReference>
<dbReference type="GO" id="GO:0005829">
    <property type="term" value="C:cytosol"/>
    <property type="evidence" value="ECO:0007669"/>
    <property type="project" value="TreeGrafter"/>
</dbReference>
<dbReference type="GO" id="GO:0070043">
    <property type="term" value="F:rRNA (guanine-N7-)-methyltransferase activity"/>
    <property type="evidence" value="ECO:0007669"/>
    <property type="project" value="UniProtKB-UniRule"/>
</dbReference>
<dbReference type="Gene3D" id="3.40.50.150">
    <property type="entry name" value="Vaccinia Virus protein VP39"/>
    <property type="match status" value="1"/>
</dbReference>
<dbReference type="HAMAP" id="MF_00074">
    <property type="entry name" value="16SrRNA_methyltr_G"/>
    <property type="match status" value="1"/>
</dbReference>
<dbReference type="InterPro" id="IPR003682">
    <property type="entry name" value="rRNA_ssu_MeTfrase_G"/>
</dbReference>
<dbReference type="InterPro" id="IPR029063">
    <property type="entry name" value="SAM-dependent_MTases_sf"/>
</dbReference>
<dbReference type="NCBIfam" id="TIGR00138">
    <property type="entry name" value="rsmG_gidB"/>
    <property type="match status" value="1"/>
</dbReference>
<dbReference type="PANTHER" id="PTHR31760">
    <property type="entry name" value="S-ADENOSYL-L-METHIONINE-DEPENDENT METHYLTRANSFERASES SUPERFAMILY PROTEIN"/>
    <property type="match status" value="1"/>
</dbReference>
<dbReference type="PANTHER" id="PTHR31760:SF0">
    <property type="entry name" value="S-ADENOSYL-L-METHIONINE-DEPENDENT METHYLTRANSFERASES SUPERFAMILY PROTEIN"/>
    <property type="match status" value="1"/>
</dbReference>
<dbReference type="Pfam" id="PF02527">
    <property type="entry name" value="GidB"/>
    <property type="match status" value="1"/>
</dbReference>
<dbReference type="PIRSF" id="PIRSF003078">
    <property type="entry name" value="GidB"/>
    <property type="match status" value="1"/>
</dbReference>
<dbReference type="SUPFAM" id="SSF53335">
    <property type="entry name" value="S-adenosyl-L-methionine-dependent methyltransferases"/>
    <property type="match status" value="1"/>
</dbReference>
<accession>Q5NEF0</accession>
<protein>
    <recommendedName>
        <fullName evidence="1">Ribosomal RNA small subunit methyltransferase G</fullName>
        <ecNumber evidence="1">2.1.1.170</ecNumber>
    </recommendedName>
    <alternativeName>
        <fullName evidence="1">16S rRNA 7-methylguanosine methyltransferase</fullName>
        <shortName evidence="1">16S rRNA m7G methyltransferase</shortName>
    </alternativeName>
</protein>
<keyword id="KW-0963">Cytoplasm</keyword>
<keyword id="KW-0489">Methyltransferase</keyword>
<keyword id="KW-1185">Reference proteome</keyword>
<keyword id="KW-0698">rRNA processing</keyword>
<keyword id="KW-0949">S-adenosyl-L-methionine</keyword>
<keyword id="KW-0808">Transferase</keyword>
<evidence type="ECO:0000255" key="1">
    <source>
        <dbReference type="HAMAP-Rule" id="MF_00074"/>
    </source>
</evidence>